<evidence type="ECO:0000255" key="1">
    <source>
        <dbReference type="HAMAP-Rule" id="MF_00139"/>
    </source>
</evidence>
<evidence type="ECO:0000255" key="2">
    <source>
        <dbReference type="PROSITE-ProRule" id="PRU01202"/>
    </source>
</evidence>
<evidence type="ECO:0000305" key="3"/>
<accession>B4S133</accession>
<accession>F2GBJ4</accession>
<name>PUR9_ALTMD</name>
<feature type="chain" id="PRO_1000096038" description="Bifunctional purine biosynthesis protein PurH">
    <location>
        <begin position="1"/>
        <end position="532"/>
    </location>
</feature>
<feature type="domain" description="MGS-like" evidence="2">
    <location>
        <begin position="1"/>
        <end position="148"/>
    </location>
</feature>
<organism>
    <name type="scientific">Alteromonas mediterranea (strain DSM 17117 / CIP 110805 / LMG 28347 / Deep ecotype)</name>
    <dbReference type="NCBI Taxonomy" id="1774373"/>
    <lineage>
        <taxon>Bacteria</taxon>
        <taxon>Pseudomonadati</taxon>
        <taxon>Pseudomonadota</taxon>
        <taxon>Gammaproteobacteria</taxon>
        <taxon>Alteromonadales</taxon>
        <taxon>Alteromonadaceae</taxon>
        <taxon>Alteromonas/Salinimonas group</taxon>
        <taxon>Alteromonas</taxon>
    </lineage>
</organism>
<sequence length="532" mass="57731">MQTPKPIKRALLSVSDKTGILDFATALHNAGVELLSTGGTAKLLAEAGLPVKEVSDHTGHPEIMAGRVKTLHPKIHGGILARRGVDEAVMEENNIAPIDLVVVNLYPFAATVANEDCTLEDAIENIDIGGPTMVRAAAKNHKDVTIVVNAADYSRVLAEMNDNNGSLTYSTRFDLAIKAFEHTAEYDGMIANYFGARLDSTGCEADCDHQHSEFPRTYNIQLTKKQDLRYGENSHQEAAFYVENNIQEASVATATQLQGKELSFNNIADTDAALECVKEFEEPACVIVKHANPCGVAIGNDILTAYDRAFKTDPTSAFGGIIAFNRELDAKTAHAIVDRQFVEVIIAPAVSDEAKEVVSAKKNVRLLACGDWAGQLTEGYDFKRVNGGLLVQERDFGMVEMEDLEVVTKRKPSEEELRDLMFCWKVAKYVKSNAIVYCKDGMTVGVGAGQMSRVYSAKIAGIKAADENLEVAGSVMASDAFFPFRDGIDAAAHAGIKAVIQPGGSMRDQEVIDAADEHGIAMVFTGMRHFRH</sequence>
<comment type="catalytic activity">
    <reaction evidence="1">
        <text>(6R)-10-formyltetrahydrofolate + 5-amino-1-(5-phospho-beta-D-ribosyl)imidazole-4-carboxamide = 5-formamido-1-(5-phospho-D-ribosyl)imidazole-4-carboxamide + (6S)-5,6,7,8-tetrahydrofolate</text>
        <dbReference type="Rhea" id="RHEA:22192"/>
        <dbReference type="ChEBI" id="CHEBI:57453"/>
        <dbReference type="ChEBI" id="CHEBI:58467"/>
        <dbReference type="ChEBI" id="CHEBI:58475"/>
        <dbReference type="ChEBI" id="CHEBI:195366"/>
        <dbReference type="EC" id="2.1.2.3"/>
    </reaction>
</comment>
<comment type="catalytic activity">
    <reaction evidence="1">
        <text>IMP + H2O = 5-formamido-1-(5-phospho-D-ribosyl)imidazole-4-carboxamide</text>
        <dbReference type="Rhea" id="RHEA:18445"/>
        <dbReference type="ChEBI" id="CHEBI:15377"/>
        <dbReference type="ChEBI" id="CHEBI:58053"/>
        <dbReference type="ChEBI" id="CHEBI:58467"/>
        <dbReference type="EC" id="3.5.4.10"/>
    </reaction>
</comment>
<comment type="pathway">
    <text evidence="1">Purine metabolism; IMP biosynthesis via de novo pathway; 5-formamido-1-(5-phospho-D-ribosyl)imidazole-4-carboxamide from 5-amino-1-(5-phospho-D-ribosyl)imidazole-4-carboxamide (10-formyl THF route): step 1/1.</text>
</comment>
<comment type="pathway">
    <text evidence="1">Purine metabolism; IMP biosynthesis via de novo pathway; IMP from 5-formamido-1-(5-phospho-D-ribosyl)imidazole-4-carboxamide: step 1/1.</text>
</comment>
<comment type="domain">
    <text evidence="1">The IMP cyclohydrolase activity resides in the N-terminal region.</text>
</comment>
<comment type="similarity">
    <text evidence="1">Belongs to the PurH family.</text>
</comment>
<comment type="sequence caution" evidence="3">
    <conflict type="frameshift">
        <sequence resource="EMBL" id="CP001103"/>
    </conflict>
</comment>
<keyword id="KW-0378">Hydrolase</keyword>
<keyword id="KW-0511">Multifunctional enzyme</keyword>
<keyword id="KW-0658">Purine biosynthesis</keyword>
<keyword id="KW-0808">Transferase</keyword>
<proteinExistence type="inferred from homology"/>
<reference key="1">
    <citation type="journal article" date="2008" name="ISME J.">
        <title>Comparative genomics of two ecotypes of the marine planktonic copiotroph Alteromonas macleodii suggests alternative lifestyles associated with different kinds of particulate organic matter.</title>
        <authorList>
            <person name="Ivars-Martinez E."/>
            <person name="Martin-Cuadrado A.-B."/>
            <person name="D'Auria G."/>
            <person name="Mira A."/>
            <person name="Ferriera S."/>
            <person name="Johnson J."/>
            <person name="Friedman R."/>
            <person name="Rodriguez-Valera F."/>
        </authorList>
    </citation>
    <scope>NUCLEOTIDE SEQUENCE [LARGE SCALE GENOMIC DNA]</scope>
    <source>
        <strain>DSM 17117 / CIP 110805 / LMG 28347 / Deep ecotype</strain>
    </source>
</reference>
<gene>
    <name evidence="1" type="primary">purH</name>
    <name type="ordered locus">MADE_1019740</name>
</gene>
<protein>
    <recommendedName>
        <fullName evidence="1">Bifunctional purine biosynthesis protein PurH</fullName>
    </recommendedName>
    <domain>
        <recommendedName>
            <fullName evidence="1">Phosphoribosylaminoimidazolecarboxamide formyltransferase</fullName>
            <ecNumber evidence="1">2.1.2.3</ecNumber>
        </recommendedName>
        <alternativeName>
            <fullName evidence="1">AICAR transformylase</fullName>
        </alternativeName>
    </domain>
    <domain>
        <recommendedName>
            <fullName evidence="1">IMP cyclohydrolase</fullName>
            <ecNumber evidence="1">3.5.4.10</ecNumber>
        </recommendedName>
        <alternativeName>
            <fullName evidence="1">ATIC</fullName>
        </alternativeName>
        <alternativeName>
            <fullName evidence="1">IMP synthase</fullName>
        </alternativeName>
        <alternativeName>
            <fullName evidence="1">Inosinicase</fullName>
        </alternativeName>
    </domain>
</protein>
<dbReference type="EC" id="2.1.2.3" evidence="1"/>
<dbReference type="EC" id="3.5.4.10" evidence="1"/>
<dbReference type="EMBL" id="CP001103">
    <property type="status" value="NOT_ANNOTATED_CDS"/>
    <property type="molecule type" value="Genomic_DNA"/>
</dbReference>
<dbReference type="SMR" id="B4S133"/>
<dbReference type="UniPathway" id="UPA00074">
    <property type="reaction ID" value="UER00133"/>
</dbReference>
<dbReference type="UniPathway" id="UPA00074">
    <property type="reaction ID" value="UER00135"/>
</dbReference>
<dbReference type="Proteomes" id="UP000001870">
    <property type="component" value="Chromosome"/>
</dbReference>
<dbReference type="GO" id="GO:0005829">
    <property type="term" value="C:cytosol"/>
    <property type="evidence" value="ECO:0007669"/>
    <property type="project" value="TreeGrafter"/>
</dbReference>
<dbReference type="GO" id="GO:0003937">
    <property type="term" value="F:IMP cyclohydrolase activity"/>
    <property type="evidence" value="ECO:0007669"/>
    <property type="project" value="UniProtKB-UniRule"/>
</dbReference>
<dbReference type="GO" id="GO:0004643">
    <property type="term" value="F:phosphoribosylaminoimidazolecarboxamide formyltransferase activity"/>
    <property type="evidence" value="ECO:0007669"/>
    <property type="project" value="UniProtKB-UniRule"/>
</dbReference>
<dbReference type="GO" id="GO:0006189">
    <property type="term" value="P:'de novo' IMP biosynthetic process"/>
    <property type="evidence" value="ECO:0007669"/>
    <property type="project" value="UniProtKB-UniRule"/>
</dbReference>
<dbReference type="CDD" id="cd01421">
    <property type="entry name" value="IMPCH"/>
    <property type="match status" value="1"/>
</dbReference>
<dbReference type="FunFam" id="3.40.140.20:FF:000001">
    <property type="entry name" value="Bifunctional purine biosynthesis protein PurH"/>
    <property type="match status" value="1"/>
</dbReference>
<dbReference type="FunFam" id="3.40.140.20:FF:000002">
    <property type="entry name" value="Bifunctional purine biosynthesis protein PurH"/>
    <property type="match status" value="1"/>
</dbReference>
<dbReference type="FunFam" id="3.40.50.1380:FF:000001">
    <property type="entry name" value="Bifunctional purine biosynthesis protein PurH"/>
    <property type="match status" value="1"/>
</dbReference>
<dbReference type="Gene3D" id="3.40.140.20">
    <property type="match status" value="2"/>
</dbReference>
<dbReference type="Gene3D" id="3.40.50.1380">
    <property type="entry name" value="Methylglyoxal synthase-like domain"/>
    <property type="match status" value="1"/>
</dbReference>
<dbReference type="HAMAP" id="MF_00139">
    <property type="entry name" value="PurH"/>
    <property type="match status" value="1"/>
</dbReference>
<dbReference type="InterPro" id="IPR024051">
    <property type="entry name" value="AICAR_Tfase_dup_dom_sf"/>
</dbReference>
<dbReference type="InterPro" id="IPR016193">
    <property type="entry name" value="Cytidine_deaminase-like"/>
</dbReference>
<dbReference type="InterPro" id="IPR011607">
    <property type="entry name" value="MGS-like_dom"/>
</dbReference>
<dbReference type="InterPro" id="IPR036914">
    <property type="entry name" value="MGS-like_dom_sf"/>
</dbReference>
<dbReference type="InterPro" id="IPR002695">
    <property type="entry name" value="PurH-like"/>
</dbReference>
<dbReference type="NCBIfam" id="NF002049">
    <property type="entry name" value="PRK00881.1"/>
    <property type="match status" value="1"/>
</dbReference>
<dbReference type="NCBIfam" id="TIGR00355">
    <property type="entry name" value="purH"/>
    <property type="match status" value="1"/>
</dbReference>
<dbReference type="PANTHER" id="PTHR11692:SF0">
    <property type="entry name" value="BIFUNCTIONAL PURINE BIOSYNTHESIS PROTEIN ATIC"/>
    <property type="match status" value="1"/>
</dbReference>
<dbReference type="PANTHER" id="PTHR11692">
    <property type="entry name" value="BIFUNCTIONAL PURINE BIOSYNTHESIS PROTEIN PURH"/>
    <property type="match status" value="1"/>
</dbReference>
<dbReference type="Pfam" id="PF01808">
    <property type="entry name" value="AICARFT_IMPCHas"/>
    <property type="match status" value="1"/>
</dbReference>
<dbReference type="Pfam" id="PF02142">
    <property type="entry name" value="MGS"/>
    <property type="match status" value="1"/>
</dbReference>
<dbReference type="PIRSF" id="PIRSF000414">
    <property type="entry name" value="AICARFT_IMPCHas"/>
    <property type="match status" value="1"/>
</dbReference>
<dbReference type="SMART" id="SM00798">
    <property type="entry name" value="AICARFT_IMPCHas"/>
    <property type="match status" value="1"/>
</dbReference>
<dbReference type="SMART" id="SM00851">
    <property type="entry name" value="MGS"/>
    <property type="match status" value="1"/>
</dbReference>
<dbReference type="SUPFAM" id="SSF53927">
    <property type="entry name" value="Cytidine deaminase-like"/>
    <property type="match status" value="1"/>
</dbReference>
<dbReference type="SUPFAM" id="SSF52335">
    <property type="entry name" value="Methylglyoxal synthase-like"/>
    <property type="match status" value="1"/>
</dbReference>
<dbReference type="PROSITE" id="PS51855">
    <property type="entry name" value="MGS"/>
    <property type="match status" value="1"/>
</dbReference>